<comment type="function">
    <text evidence="1">Catalyzes the condensation of (S)-aspartate-beta-semialdehyde [(S)-ASA] and pyruvate to 4-hydroxy-tetrahydrodipicolinate (HTPA).</text>
</comment>
<comment type="catalytic activity">
    <reaction evidence="1">
        <text>L-aspartate 4-semialdehyde + pyruvate = (2S,4S)-4-hydroxy-2,3,4,5-tetrahydrodipicolinate + H2O + H(+)</text>
        <dbReference type="Rhea" id="RHEA:34171"/>
        <dbReference type="ChEBI" id="CHEBI:15361"/>
        <dbReference type="ChEBI" id="CHEBI:15377"/>
        <dbReference type="ChEBI" id="CHEBI:15378"/>
        <dbReference type="ChEBI" id="CHEBI:67139"/>
        <dbReference type="ChEBI" id="CHEBI:537519"/>
        <dbReference type="EC" id="4.3.3.7"/>
    </reaction>
</comment>
<comment type="pathway">
    <text evidence="1">Amino-acid biosynthesis; L-lysine biosynthesis via DAP pathway; (S)-tetrahydrodipicolinate from L-aspartate: step 3/4.</text>
</comment>
<comment type="subunit">
    <text evidence="1">Homotetramer; dimer of dimers.</text>
</comment>
<comment type="subcellular location">
    <subcellularLocation>
        <location evidence="1">Cytoplasm</location>
    </subcellularLocation>
</comment>
<comment type="similarity">
    <text evidence="1">Belongs to the DapA family.</text>
</comment>
<comment type="caution">
    <text evidence="2">Was originally thought to be a dihydrodipicolinate synthase (DHDPS), catalyzing the condensation of (S)-aspartate-beta-semialdehyde [(S)-ASA] and pyruvate to dihydrodipicolinate (DHDP). However, it was shown in E.coli that the product of the enzymatic reaction is not dihydrodipicolinate but in fact (4S)-4-hydroxy-2,3,4,5-tetrahydro-(2S)-dipicolinic acid (HTPA), and that the consecutive dehydration reaction leading to DHDP is not spontaneous but catalyzed by DapB.</text>
</comment>
<reference key="1">
    <citation type="journal article" date="2011" name="J. Bacteriol.">
        <title>Complete genome sequence of the Thermophilic Bacterium Exiguobacterium sp. AT1b.</title>
        <authorList>
            <person name="Vishnivetskaya T.A."/>
            <person name="Lucas S."/>
            <person name="Copeland A."/>
            <person name="Lapidus A."/>
            <person name="Glavina del Rio T."/>
            <person name="Dalin E."/>
            <person name="Tice H."/>
            <person name="Bruce D.C."/>
            <person name="Goodwin L.A."/>
            <person name="Pitluck S."/>
            <person name="Saunders E."/>
            <person name="Brettin T."/>
            <person name="Detter C."/>
            <person name="Han C."/>
            <person name="Larimer F."/>
            <person name="Land M.L."/>
            <person name="Hauser L.J."/>
            <person name="Kyrpides N.C."/>
            <person name="Ovchinnikova G."/>
            <person name="Kathariou S."/>
            <person name="Ramaley R.F."/>
            <person name="Rodrigues D.F."/>
            <person name="Hendrix C."/>
            <person name="Richardson P."/>
            <person name="Tiedje J.M."/>
        </authorList>
    </citation>
    <scope>NUCLEOTIDE SEQUENCE [LARGE SCALE GENOMIC DNA]</scope>
    <source>
        <strain>ATCC BAA-1283 / AT1b</strain>
    </source>
</reference>
<protein>
    <recommendedName>
        <fullName evidence="1">4-hydroxy-tetrahydrodipicolinate synthase</fullName>
        <shortName evidence="1">HTPA synthase</shortName>
        <ecNumber evidence="1">4.3.3.7</ecNumber>
    </recommendedName>
</protein>
<gene>
    <name evidence="1" type="primary">dapA</name>
    <name type="ordered locus">EAT1b_2262</name>
</gene>
<feature type="chain" id="PRO_1000206031" description="4-hydroxy-tetrahydrodipicolinate synthase">
    <location>
        <begin position="1"/>
        <end position="293"/>
    </location>
</feature>
<feature type="active site" description="Proton donor/acceptor" evidence="1">
    <location>
        <position position="133"/>
    </location>
</feature>
<feature type="active site" description="Schiff-base intermediate with substrate" evidence="1">
    <location>
        <position position="161"/>
    </location>
</feature>
<feature type="binding site" evidence="1">
    <location>
        <position position="45"/>
    </location>
    <ligand>
        <name>pyruvate</name>
        <dbReference type="ChEBI" id="CHEBI:15361"/>
    </ligand>
</feature>
<feature type="binding site" evidence="1">
    <location>
        <position position="203"/>
    </location>
    <ligand>
        <name>pyruvate</name>
        <dbReference type="ChEBI" id="CHEBI:15361"/>
    </ligand>
</feature>
<feature type="site" description="Part of a proton relay during catalysis" evidence="1">
    <location>
        <position position="44"/>
    </location>
</feature>
<feature type="site" description="Part of a proton relay during catalysis" evidence="1">
    <location>
        <position position="107"/>
    </location>
</feature>
<sequence>MFTGVATALATPFQENGQLNLEAWAALIEDQIKEGVTGLVIGGTTGEGMTITDDEFETLLVRAVEVANGRAVIIAGTGSNNTAVSIEKTKRAAELGAEMAMVVTPYYNKSTQAGLIAHFTAIADASPIPLMLYNVPSRTGVALAPETVGELAEHPRITALKEASGDISVMAQMMAHIPEGFTVYCGNDDQILPYMAWGAQGVVSVLSNVYPGATVALAEALLAGDLQTARTWQIRLLPVIDELFAEVNPIPVKAALQARGFEVGAPRLPLVPMSATAEAKLLSAMEQFNEVRQ</sequence>
<accession>C4L2D2</accession>
<name>DAPA_EXISA</name>
<proteinExistence type="inferred from homology"/>
<organism>
    <name type="scientific">Exiguobacterium sp. (strain ATCC BAA-1283 / AT1b)</name>
    <dbReference type="NCBI Taxonomy" id="360911"/>
    <lineage>
        <taxon>Bacteria</taxon>
        <taxon>Bacillati</taxon>
        <taxon>Bacillota</taxon>
        <taxon>Bacilli</taxon>
        <taxon>Bacillales</taxon>
        <taxon>Bacillales Family XII. Incertae Sedis</taxon>
        <taxon>Exiguobacterium</taxon>
    </lineage>
</organism>
<keyword id="KW-0028">Amino-acid biosynthesis</keyword>
<keyword id="KW-0963">Cytoplasm</keyword>
<keyword id="KW-0220">Diaminopimelate biosynthesis</keyword>
<keyword id="KW-0456">Lyase</keyword>
<keyword id="KW-0457">Lysine biosynthesis</keyword>
<keyword id="KW-0704">Schiff base</keyword>
<evidence type="ECO:0000255" key="1">
    <source>
        <dbReference type="HAMAP-Rule" id="MF_00418"/>
    </source>
</evidence>
<evidence type="ECO:0000305" key="2"/>
<dbReference type="EC" id="4.3.3.7" evidence="1"/>
<dbReference type="EMBL" id="CP001615">
    <property type="protein sequence ID" value="ACQ71184.1"/>
    <property type="molecule type" value="Genomic_DNA"/>
</dbReference>
<dbReference type="RefSeq" id="WP_015880743.1">
    <property type="nucleotide sequence ID" value="NC_012673.1"/>
</dbReference>
<dbReference type="SMR" id="C4L2D2"/>
<dbReference type="STRING" id="360911.EAT1b_2262"/>
<dbReference type="KEGG" id="eat:EAT1b_2262"/>
<dbReference type="eggNOG" id="COG0329">
    <property type="taxonomic scope" value="Bacteria"/>
</dbReference>
<dbReference type="HOGENOM" id="CLU_049343_7_1_9"/>
<dbReference type="OrthoDB" id="9782828at2"/>
<dbReference type="UniPathway" id="UPA00034">
    <property type="reaction ID" value="UER00017"/>
</dbReference>
<dbReference type="Proteomes" id="UP000000716">
    <property type="component" value="Chromosome"/>
</dbReference>
<dbReference type="GO" id="GO:0005829">
    <property type="term" value="C:cytosol"/>
    <property type="evidence" value="ECO:0007669"/>
    <property type="project" value="TreeGrafter"/>
</dbReference>
<dbReference type="GO" id="GO:0008840">
    <property type="term" value="F:4-hydroxy-tetrahydrodipicolinate synthase activity"/>
    <property type="evidence" value="ECO:0007669"/>
    <property type="project" value="UniProtKB-UniRule"/>
</dbReference>
<dbReference type="GO" id="GO:0019877">
    <property type="term" value="P:diaminopimelate biosynthetic process"/>
    <property type="evidence" value="ECO:0007669"/>
    <property type="project" value="UniProtKB-UniRule"/>
</dbReference>
<dbReference type="GO" id="GO:0009089">
    <property type="term" value="P:lysine biosynthetic process via diaminopimelate"/>
    <property type="evidence" value="ECO:0007669"/>
    <property type="project" value="UniProtKB-UniRule"/>
</dbReference>
<dbReference type="CDD" id="cd00950">
    <property type="entry name" value="DHDPS"/>
    <property type="match status" value="1"/>
</dbReference>
<dbReference type="Gene3D" id="3.20.20.70">
    <property type="entry name" value="Aldolase class I"/>
    <property type="match status" value="1"/>
</dbReference>
<dbReference type="HAMAP" id="MF_00418">
    <property type="entry name" value="DapA"/>
    <property type="match status" value="1"/>
</dbReference>
<dbReference type="InterPro" id="IPR013785">
    <property type="entry name" value="Aldolase_TIM"/>
</dbReference>
<dbReference type="InterPro" id="IPR005263">
    <property type="entry name" value="DapA"/>
</dbReference>
<dbReference type="InterPro" id="IPR002220">
    <property type="entry name" value="DapA-like"/>
</dbReference>
<dbReference type="InterPro" id="IPR020625">
    <property type="entry name" value="Schiff_base-form_aldolases_AS"/>
</dbReference>
<dbReference type="InterPro" id="IPR020624">
    <property type="entry name" value="Schiff_base-form_aldolases_CS"/>
</dbReference>
<dbReference type="NCBIfam" id="TIGR00674">
    <property type="entry name" value="dapA"/>
    <property type="match status" value="1"/>
</dbReference>
<dbReference type="PANTHER" id="PTHR12128:SF66">
    <property type="entry name" value="4-HYDROXY-2-OXOGLUTARATE ALDOLASE, MITOCHONDRIAL"/>
    <property type="match status" value="1"/>
</dbReference>
<dbReference type="PANTHER" id="PTHR12128">
    <property type="entry name" value="DIHYDRODIPICOLINATE SYNTHASE"/>
    <property type="match status" value="1"/>
</dbReference>
<dbReference type="Pfam" id="PF00701">
    <property type="entry name" value="DHDPS"/>
    <property type="match status" value="1"/>
</dbReference>
<dbReference type="PIRSF" id="PIRSF001365">
    <property type="entry name" value="DHDPS"/>
    <property type="match status" value="1"/>
</dbReference>
<dbReference type="PRINTS" id="PR00146">
    <property type="entry name" value="DHPICSNTHASE"/>
</dbReference>
<dbReference type="SMART" id="SM01130">
    <property type="entry name" value="DHDPS"/>
    <property type="match status" value="1"/>
</dbReference>
<dbReference type="SUPFAM" id="SSF51569">
    <property type="entry name" value="Aldolase"/>
    <property type="match status" value="1"/>
</dbReference>
<dbReference type="PROSITE" id="PS00665">
    <property type="entry name" value="DHDPS_1"/>
    <property type="match status" value="1"/>
</dbReference>
<dbReference type="PROSITE" id="PS00666">
    <property type="entry name" value="DHDPS_2"/>
    <property type="match status" value="1"/>
</dbReference>